<organism>
    <name type="scientific">Streptococcus pyogenes serotype M3 (strain SSI-1)</name>
    <dbReference type="NCBI Taxonomy" id="193567"/>
    <lineage>
        <taxon>Bacteria</taxon>
        <taxon>Bacillati</taxon>
        <taxon>Bacillota</taxon>
        <taxon>Bacilli</taxon>
        <taxon>Lactobacillales</taxon>
        <taxon>Streptococcaceae</taxon>
        <taxon>Streptococcus</taxon>
    </lineage>
</organism>
<proteinExistence type="inferred from homology"/>
<comment type="function">
    <text evidence="1">Small subunit of the glutamine-dependent carbamoyl phosphate synthetase (CPSase). CPSase catalyzes the formation of carbamoyl phosphate from the ammonia moiety of glutamine, carbonate, and phosphate donated by ATP, constituting the first step of 2 biosynthetic pathways, one leading to arginine and/or urea and the other to pyrimidine nucleotides. The small subunit (glutamine amidotransferase) binds and cleaves glutamine to supply the large subunit with the substrate ammonia.</text>
</comment>
<comment type="catalytic activity">
    <reaction evidence="1">
        <text>hydrogencarbonate + L-glutamine + 2 ATP + H2O = carbamoyl phosphate + L-glutamate + 2 ADP + phosphate + 2 H(+)</text>
        <dbReference type="Rhea" id="RHEA:18633"/>
        <dbReference type="ChEBI" id="CHEBI:15377"/>
        <dbReference type="ChEBI" id="CHEBI:15378"/>
        <dbReference type="ChEBI" id="CHEBI:17544"/>
        <dbReference type="ChEBI" id="CHEBI:29985"/>
        <dbReference type="ChEBI" id="CHEBI:30616"/>
        <dbReference type="ChEBI" id="CHEBI:43474"/>
        <dbReference type="ChEBI" id="CHEBI:58228"/>
        <dbReference type="ChEBI" id="CHEBI:58359"/>
        <dbReference type="ChEBI" id="CHEBI:456216"/>
        <dbReference type="EC" id="6.3.5.5"/>
    </reaction>
</comment>
<comment type="catalytic activity">
    <molecule>Carbamoyl phosphate synthase small chain</molecule>
    <reaction evidence="1">
        <text>L-glutamine + H2O = L-glutamate + NH4(+)</text>
        <dbReference type="Rhea" id="RHEA:15889"/>
        <dbReference type="ChEBI" id="CHEBI:15377"/>
        <dbReference type="ChEBI" id="CHEBI:28938"/>
        <dbReference type="ChEBI" id="CHEBI:29985"/>
        <dbReference type="ChEBI" id="CHEBI:58359"/>
    </reaction>
</comment>
<comment type="pathway">
    <text evidence="1">Amino-acid biosynthesis; L-arginine biosynthesis; carbamoyl phosphate from bicarbonate: step 1/1.</text>
</comment>
<comment type="pathway">
    <text evidence="1">Pyrimidine metabolism; UMP biosynthesis via de novo pathway; (S)-dihydroorotate from bicarbonate: step 1/3.</text>
</comment>
<comment type="subunit">
    <text evidence="1">Composed of two chains; the small (or glutamine) chain promotes the hydrolysis of glutamine to ammonia, which is used by the large (or ammonia) chain to synthesize carbamoyl phosphate. Tetramer of heterodimers (alpha,beta)4.</text>
</comment>
<comment type="similarity">
    <text evidence="1">Belongs to the CarA family.</text>
</comment>
<dbReference type="EC" id="6.3.5.5" evidence="1"/>
<dbReference type="EMBL" id="BA000034">
    <property type="protein sequence ID" value="BAC64388.1"/>
    <property type="molecule type" value="Genomic_DNA"/>
</dbReference>
<dbReference type="RefSeq" id="WP_002985087.1">
    <property type="nucleotide sequence ID" value="NC_004606.1"/>
</dbReference>
<dbReference type="SMR" id="P0DA13"/>
<dbReference type="KEGG" id="sps:SPs1293"/>
<dbReference type="HOGENOM" id="CLU_035901_2_1_9"/>
<dbReference type="UniPathway" id="UPA00068">
    <property type="reaction ID" value="UER00171"/>
</dbReference>
<dbReference type="UniPathway" id="UPA00070">
    <property type="reaction ID" value="UER00115"/>
</dbReference>
<dbReference type="GO" id="GO:0005524">
    <property type="term" value="F:ATP binding"/>
    <property type="evidence" value="ECO:0007669"/>
    <property type="project" value="UniProtKB-UniRule"/>
</dbReference>
<dbReference type="GO" id="GO:0004088">
    <property type="term" value="F:carbamoyl-phosphate synthase (glutamine-hydrolyzing) activity"/>
    <property type="evidence" value="ECO:0007669"/>
    <property type="project" value="UniProtKB-UniRule"/>
</dbReference>
<dbReference type="GO" id="GO:0004359">
    <property type="term" value="F:glutaminase activity"/>
    <property type="evidence" value="ECO:0007669"/>
    <property type="project" value="RHEA"/>
</dbReference>
<dbReference type="GO" id="GO:0006207">
    <property type="term" value="P:'de novo' pyrimidine nucleobase biosynthetic process"/>
    <property type="evidence" value="ECO:0007669"/>
    <property type="project" value="InterPro"/>
</dbReference>
<dbReference type="GO" id="GO:0044205">
    <property type="term" value="P:'de novo' UMP biosynthetic process"/>
    <property type="evidence" value="ECO:0007669"/>
    <property type="project" value="UniProtKB-UniRule"/>
</dbReference>
<dbReference type="GO" id="GO:0006541">
    <property type="term" value="P:glutamine metabolic process"/>
    <property type="evidence" value="ECO:0007669"/>
    <property type="project" value="InterPro"/>
</dbReference>
<dbReference type="GO" id="GO:0006526">
    <property type="term" value="P:L-arginine biosynthetic process"/>
    <property type="evidence" value="ECO:0007669"/>
    <property type="project" value="UniProtKB-UniRule"/>
</dbReference>
<dbReference type="CDD" id="cd01744">
    <property type="entry name" value="GATase1_CPSase"/>
    <property type="match status" value="1"/>
</dbReference>
<dbReference type="FunFam" id="3.40.50.880:FF:000029">
    <property type="entry name" value="Carbamoyl-phosphate synthase small chain"/>
    <property type="match status" value="1"/>
</dbReference>
<dbReference type="FunFam" id="3.50.30.20:FF:000001">
    <property type="entry name" value="Carbamoyl-phosphate synthase small chain"/>
    <property type="match status" value="1"/>
</dbReference>
<dbReference type="Gene3D" id="3.40.50.880">
    <property type="match status" value="1"/>
</dbReference>
<dbReference type="Gene3D" id="3.50.30.20">
    <property type="entry name" value="Carbamoyl-phosphate synthase small subunit, N-terminal domain"/>
    <property type="match status" value="1"/>
</dbReference>
<dbReference type="HAMAP" id="MF_01209">
    <property type="entry name" value="CPSase_S_chain"/>
    <property type="match status" value="1"/>
</dbReference>
<dbReference type="InterPro" id="IPR050472">
    <property type="entry name" value="Anth_synth/Amidotransfase"/>
</dbReference>
<dbReference type="InterPro" id="IPR006274">
    <property type="entry name" value="CarbamoylP_synth_ssu"/>
</dbReference>
<dbReference type="InterPro" id="IPR002474">
    <property type="entry name" value="CarbamoylP_synth_ssu_N"/>
</dbReference>
<dbReference type="InterPro" id="IPR036480">
    <property type="entry name" value="CarbP_synth_ssu_N_sf"/>
</dbReference>
<dbReference type="InterPro" id="IPR029062">
    <property type="entry name" value="Class_I_gatase-like"/>
</dbReference>
<dbReference type="InterPro" id="IPR035686">
    <property type="entry name" value="CPSase_GATase1"/>
</dbReference>
<dbReference type="InterPro" id="IPR017926">
    <property type="entry name" value="GATASE"/>
</dbReference>
<dbReference type="NCBIfam" id="TIGR01368">
    <property type="entry name" value="CPSaseIIsmall"/>
    <property type="match status" value="1"/>
</dbReference>
<dbReference type="NCBIfam" id="NF009475">
    <property type="entry name" value="PRK12838.1"/>
    <property type="match status" value="1"/>
</dbReference>
<dbReference type="PANTHER" id="PTHR43418:SF7">
    <property type="entry name" value="CARBAMOYL-PHOSPHATE SYNTHASE SMALL CHAIN"/>
    <property type="match status" value="1"/>
</dbReference>
<dbReference type="PANTHER" id="PTHR43418">
    <property type="entry name" value="MULTIFUNCTIONAL TRYPTOPHAN BIOSYNTHESIS PROTEIN-RELATED"/>
    <property type="match status" value="1"/>
</dbReference>
<dbReference type="Pfam" id="PF00988">
    <property type="entry name" value="CPSase_sm_chain"/>
    <property type="match status" value="1"/>
</dbReference>
<dbReference type="Pfam" id="PF00117">
    <property type="entry name" value="GATase"/>
    <property type="match status" value="1"/>
</dbReference>
<dbReference type="PRINTS" id="PR00097">
    <property type="entry name" value="ANTSNTHASEII"/>
</dbReference>
<dbReference type="PRINTS" id="PR00099">
    <property type="entry name" value="CPSGATASE"/>
</dbReference>
<dbReference type="PRINTS" id="PR00096">
    <property type="entry name" value="GATASE"/>
</dbReference>
<dbReference type="SMART" id="SM01097">
    <property type="entry name" value="CPSase_sm_chain"/>
    <property type="match status" value="1"/>
</dbReference>
<dbReference type="SUPFAM" id="SSF52021">
    <property type="entry name" value="Carbamoyl phosphate synthetase, small subunit N-terminal domain"/>
    <property type="match status" value="1"/>
</dbReference>
<dbReference type="SUPFAM" id="SSF52317">
    <property type="entry name" value="Class I glutamine amidotransferase-like"/>
    <property type="match status" value="1"/>
</dbReference>
<dbReference type="PROSITE" id="PS51273">
    <property type="entry name" value="GATASE_TYPE_1"/>
    <property type="match status" value="1"/>
</dbReference>
<name>CARA_STRPQ</name>
<evidence type="ECO:0000255" key="1">
    <source>
        <dbReference type="HAMAP-Rule" id="MF_01209"/>
    </source>
</evidence>
<reference key="1">
    <citation type="journal article" date="2003" name="Genome Res.">
        <title>Genome sequence of an M3 strain of Streptococcus pyogenes reveals a large-scale genomic rearrangement in invasive strains and new insights into phage evolution.</title>
        <authorList>
            <person name="Nakagawa I."/>
            <person name="Kurokawa K."/>
            <person name="Yamashita A."/>
            <person name="Nakata M."/>
            <person name="Tomiyasu Y."/>
            <person name="Okahashi N."/>
            <person name="Kawabata S."/>
            <person name="Yamazaki K."/>
            <person name="Shiba T."/>
            <person name="Yasunaga T."/>
            <person name="Hayashi H."/>
            <person name="Hattori M."/>
            <person name="Hamada S."/>
        </authorList>
    </citation>
    <scope>NUCLEOTIDE SEQUENCE [LARGE SCALE GENOMIC DNA]</scope>
    <source>
        <strain>SSI-1</strain>
    </source>
</reference>
<keyword id="KW-0028">Amino-acid biosynthesis</keyword>
<keyword id="KW-0055">Arginine biosynthesis</keyword>
<keyword id="KW-0067">ATP-binding</keyword>
<keyword id="KW-0315">Glutamine amidotransferase</keyword>
<keyword id="KW-0436">Ligase</keyword>
<keyword id="KW-0547">Nucleotide-binding</keyword>
<keyword id="KW-0665">Pyrimidine biosynthesis</keyword>
<accession>P0DA13</accession>
<accession>P63736</accession>
<accession>Q9A0C7</accession>
<protein>
    <recommendedName>
        <fullName evidence="1">Carbamoyl phosphate synthase small chain</fullName>
        <ecNumber evidence="1">6.3.5.5</ecNumber>
    </recommendedName>
    <alternativeName>
        <fullName evidence="1">Carbamoyl phosphate synthetase glutamine chain</fullName>
    </alternativeName>
</protein>
<feature type="chain" id="PRO_0000411294" description="Carbamoyl phosphate synthase small chain">
    <location>
        <begin position="1"/>
        <end position="360"/>
    </location>
</feature>
<feature type="domain" description="Glutamine amidotransferase type-1" evidence="1">
    <location>
        <begin position="172"/>
        <end position="358"/>
    </location>
</feature>
<feature type="region of interest" description="CPSase" evidence="1">
    <location>
        <begin position="1"/>
        <end position="169"/>
    </location>
</feature>
<feature type="active site" description="Nucleophile" evidence="1">
    <location>
        <position position="247"/>
    </location>
</feature>
<feature type="active site" evidence="1">
    <location>
        <position position="331"/>
    </location>
</feature>
<feature type="active site" evidence="1">
    <location>
        <position position="333"/>
    </location>
</feature>
<feature type="binding site" evidence="1">
    <location>
        <position position="46"/>
    </location>
    <ligand>
        <name>L-glutamine</name>
        <dbReference type="ChEBI" id="CHEBI:58359"/>
    </ligand>
</feature>
<feature type="binding site" evidence="1">
    <location>
        <position position="220"/>
    </location>
    <ligand>
        <name>L-glutamine</name>
        <dbReference type="ChEBI" id="CHEBI:58359"/>
    </ligand>
</feature>
<feature type="binding site" evidence="1">
    <location>
        <position position="222"/>
    </location>
    <ligand>
        <name>L-glutamine</name>
        <dbReference type="ChEBI" id="CHEBI:58359"/>
    </ligand>
</feature>
<feature type="binding site" evidence="1">
    <location>
        <position position="248"/>
    </location>
    <ligand>
        <name>L-glutamine</name>
        <dbReference type="ChEBI" id="CHEBI:58359"/>
    </ligand>
</feature>
<feature type="binding site" evidence="1">
    <location>
        <position position="251"/>
    </location>
    <ligand>
        <name>L-glutamine</name>
        <dbReference type="ChEBI" id="CHEBI:58359"/>
    </ligand>
</feature>
<feature type="binding site" evidence="1">
    <location>
        <position position="289"/>
    </location>
    <ligand>
        <name>L-glutamine</name>
        <dbReference type="ChEBI" id="CHEBI:58359"/>
    </ligand>
</feature>
<feature type="binding site" evidence="1">
    <location>
        <position position="291"/>
    </location>
    <ligand>
        <name>L-glutamine</name>
        <dbReference type="ChEBI" id="CHEBI:58359"/>
    </ligand>
</feature>
<feature type="binding site" evidence="1">
    <location>
        <position position="292"/>
    </location>
    <ligand>
        <name>L-glutamine</name>
        <dbReference type="ChEBI" id="CHEBI:58359"/>
    </ligand>
</feature>
<gene>
    <name evidence="1" type="primary">carA</name>
    <name type="ordered locus">SPs1293</name>
</gene>
<sequence length="360" mass="39757">MTKRLLILEDGTIFEGEPFGADIDVTGEIVFNTGMTGYQESITDQSYNGQILTFTYPLIGNYGINRDDYESISPTCKGVVVSEVSRLASNWRKQMTLDAFLKIKGIPGISGIDTRALTKIIRQHGTMKATMADDGDSIQHLKDQLRATVLPTNTIEQVSTKTAYPAPGIGKNIVLVDFGLKHSILREFSKRQCNITVVPFNITAEEVLQLNPDGLMLSNGPGNPEDLPEALDMIRGVQGKIPIFGICMGHQLFSLANGAKTCKMTFGHRGFNHAVREIATGRIDFTSQNHGYAVERSSLPDTLMVTHEDINDKTVEGVKHRDFPAFSVQFHPDAAPGPHDASYLFDEFLEMIDSWRCTSK</sequence>